<organism>
    <name type="scientific">Polaromonas sp. (strain JS666 / ATCC BAA-500)</name>
    <dbReference type="NCBI Taxonomy" id="296591"/>
    <lineage>
        <taxon>Bacteria</taxon>
        <taxon>Pseudomonadati</taxon>
        <taxon>Pseudomonadota</taxon>
        <taxon>Betaproteobacteria</taxon>
        <taxon>Burkholderiales</taxon>
        <taxon>Comamonadaceae</taxon>
        <taxon>Polaromonas</taxon>
    </lineage>
</organism>
<feature type="chain" id="PRO_1000184764" description="ATP synthase subunit delta">
    <location>
        <begin position="1"/>
        <end position="176"/>
    </location>
</feature>
<evidence type="ECO:0000255" key="1">
    <source>
        <dbReference type="HAMAP-Rule" id="MF_01416"/>
    </source>
</evidence>
<proteinExistence type="inferred from homology"/>
<sequence>MAELATIARPYAEALFKASGSDLGAAAAWLDELAAIAANVQLQQFAGNPGVTVTQTFDVISGVAKSQLPDAAKNFLRTVIENGRISVLPEIAAQFRVLKNAQSGSSDATVYSAFPLEGPALADLAATLEKRFGRKLNFAVELEPALIGGVRVVVGDEVLDTSVKARLEQMKVALIS</sequence>
<dbReference type="EMBL" id="CP000316">
    <property type="protein sequence ID" value="ABE42289.1"/>
    <property type="molecule type" value="Genomic_DNA"/>
</dbReference>
<dbReference type="RefSeq" id="WP_011481296.1">
    <property type="nucleotide sequence ID" value="NC_007948.1"/>
</dbReference>
<dbReference type="SMR" id="Q12GQ3"/>
<dbReference type="STRING" id="296591.Bpro_0324"/>
<dbReference type="KEGG" id="pol:Bpro_0324"/>
<dbReference type="eggNOG" id="COG0712">
    <property type="taxonomic scope" value="Bacteria"/>
</dbReference>
<dbReference type="HOGENOM" id="CLU_085114_3_0_4"/>
<dbReference type="OrthoDB" id="9816221at2"/>
<dbReference type="Proteomes" id="UP000001983">
    <property type="component" value="Chromosome"/>
</dbReference>
<dbReference type="GO" id="GO:0005886">
    <property type="term" value="C:plasma membrane"/>
    <property type="evidence" value="ECO:0007669"/>
    <property type="project" value="UniProtKB-SubCell"/>
</dbReference>
<dbReference type="GO" id="GO:0045259">
    <property type="term" value="C:proton-transporting ATP synthase complex"/>
    <property type="evidence" value="ECO:0007669"/>
    <property type="project" value="UniProtKB-KW"/>
</dbReference>
<dbReference type="GO" id="GO:0046933">
    <property type="term" value="F:proton-transporting ATP synthase activity, rotational mechanism"/>
    <property type="evidence" value="ECO:0007669"/>
    <property type="project" value="UniProtKB-UniRule"/>
</dbReference>
<dbReference type="Gene3D" id="1.10.520.20">
    <property type="entry name" value="N-terminal domain of the delta subunit of the F1F0-ATP synthase"/>
    <property type="match status" value="1"/>
</dbReference>
<dbReference type="HAMAP" id="MF_01416">
    <property type="entry name" value="ATP_synth_delta_bact"/>
    <property type="match status" value="1"/>
</dbReference>
<dbReference type="InterPro" id="IPR026015">
    <property type="entry name" value="ATP_synth_OSCP/delta_N_sf"/>
</dbReference>
<dbReference type="InterPro" id="IPR000711">
    <property type="entry name" value="ATPase_OSCP/dsu"/>
</dbReference>
<dbReference type="NCBIfam" id="TIGR01145">
    <property type="entry name" value="ATP_synt_delta"/>
    <property type="match status" value="1"/>
</dbReference>
<dbReference type="NCBIfam" id="NF004402">
    <property type="entry name" value="PRK05758.2-2"/>
    <property type="match status" value="1"/>
</dbReference>
<dbReference type="PANTHER" id="PTHR11910">
    <property type="entry name" value="ATP SYNTHASE DELTA CHAIN"/>
    <property type="match status" value="1"/>
</dbReference>
<dbReference type="Pfam" id="PF00213">
    <property type="entry name" value="OSCP"/>
    <property type="match status" value="1"/>
</dbReference>
<dbReference type="PRINTS" id="PR00125">
    <property type="entry name" value="ATPASEDELTA"/>
</dbReference>
<dbReference type="SUPFAM" id="SSF47928">
    <property type="entry name" value="N-terminal domain of the delta subunit of the F1F0-ATP synthase"/>
    <property type="match status" value="1"/>
</dbReference>
<gene>
    <name evidence="1" type="primary">atpH</name>
    <name type="ordered locus">Bpro_0324</name>
</gene>
<comment type="function">
    <text evidence="1">F(1)F(0) ATP synthase produces ATP from ADP in the presence of a proton or sodium gradient. F-type ATPases consist of two structural domains, F(1) containing the extramembraneous catalytic core and F(0) containing the membrane proton channel, linked together by a central stalk and a peripheral stalk. During catalysis, ATP synthesis in the catalytic domain of F(1) is coupled via a rotary mechanism of the central stalk subunits to proton translocation.</text>
</comment>
<comment type="function">
    <text evidence="1">This protein is part of the stalk that links CF(0) to CF(1). It either transmits conformational changes from CF(0) to CF(1) or is implicated in proton conduction.</text>
</comment>
<comment type="subunit">
    <text evidence="1">F-type ATPases have 2 components, F(1) - the catalytic core - and F(0) - the membrane proton channel. F(1) has five subunits: alpha(3), beta(3), gamma(1), delta(1), epsilon(1). F(0) has three main subunits: a(1), b(2) and c(10-14). The alpha and beta chains form an alternating ring which encloses part of the gamma chain. F(1) is attached to F(0) by a central stalk formed by the gamma and epsilon chains, while a peripheral stalk is formed by the delta and b chains.</text>
</comment>
<comment type="subcellular location">
    <subcellularLocation>
        <location evidence="1">Cell inner membrane</location>
        <topology evidence="1">Peripheral membrane protein</topology>
    </subcellularLocation>
</comment>
<comment type="similarity">
    <text evidence="1">Belongs to the ATPase delta chain family.</text>
</comment>
<protein>
    <recommendedName>
        <fullName evidence="1">ATP synthase subunit delta</fullName>
    </recommendedName>
    <alternativeName>
        <fullName evidence="1">ATP synthase F(1) sector subunit delta</fullName>
    </alternativeName>
    <alternativeName>
        <fullName evidence="1">F-type ATPase subunit delta</fullName>
        <shortName evidence="1">F-ATPase subunit delta</shortName>
    </alternativeName>
</protein>
<reference key="1">
    <citation type="journal article" date="2008" name="Appl. Environ. Microbiol.">
        <title>The genome of Polaromonas sp. strain JS666: insights into the evolution of a hydrocarbon- and xenobiotic-degrading bacterium, and features of relevance to biotechnology.</title>
        <authorList>
            <person name="Mattes T.E."/>
            <person name="Alexander A.K."/>
            <person name="Richardson P.M."/>
            <person name="Munk A.C."/>
            <person name="Han C.S."/>
            <person name="Stothard P."/>
            <person name="Coleman N.V."/>
        </authorList>
    </citation>
    <scope>NUCLEOTIDE SEQUENCE [LARGE SCALE GENOMIC DNA]</scope>
    <source>
        <strain>JS666 / ATCC BAA-500</strain>
    </source>
</reference>
<accession>Q12GQ3</accession>
<name>ATPD_POLSJ</name>
<keyword id="KW-0066">ATP synthesis</keyword>
<keyword id="KW-0997">Cell inner membrane</keyword>
<keyword id="KW-1003">Cell membrane</keyword>
<keyword id="KW-0139">CF(1)</keyword>
<keyword id="KW-0375">Hydrogen ion transport</keyword>
<keyword id="KW-0406">Ion transport</keyword>
<keyword id="KW-0472">Membrane</keyword>
<keyword id="KW-1185">Reference proteome</keyword>
<keyword id="KW-0813">Transport</keyword>